<feature type="chain" id="PRO_1000149113" description="Histidinol-phosphate aminotransferase">
    <location>
        <begin position="1"/>
        <end position="354"/>
    </location>
</feature>
<feature type="modified residue" description="N6-(pyridoxal phosphate)lysine" evidence="1">
    <location>
        <position position="222"/>
    </location>
</feature>
<protein>
    <recommendedName>
        <fullName evidence="1">Histidinol-phosphate aminotransferase</fullName>
        <ecNumber evidence="1">2.6.1.9</ecNumber>
    </recommendedName>
    <alternativeName>
        <fullName evidence="1">Imidazole acetol-phosphate transaminase</fullName>
    </alternativeName>
</protein>
<dbReference type="EC" id="2.6.1.9" evidence="1"/>
<dbReference type="EMBL" id="AM295250">
    <property type="protein sequence ID" value="CAL27285.1"/>
    <property type="molecule type" value="Genomic_DNA"/>
</dbReference>
<dbReference type="RefSeq" id="WP_015899630.1">
    <property type="nucleotide sequence ID" value="NC_012121.1"/>
</dbReference>
<dbReference type="SMR" id="B9DK21"/>
<dbReference type="GeneID" id="93795301"/>
<dbReference type="KEGG" id="sca:SCA_0371"/>
<dbReference type="eggNOG" id="COG0079">
    <property type="taxonomic scope" value="Bacteria"/>
</dbReference>
<dbReference type="HOGENOM" id="CLU_017584_3_3_9"/>
<dbReference type="OrthoDB" id="9813612at2"/>
<dbReference type="BioCyc" id="SCAR396513:SCA_RS01895-MONOMER"/>
<dbReference type="UniPathway" id="UPA00031">
    <property type="reaction ID" value="UER00012"/>
</dbReference>
<dbReference type="Proteomes" id="UP000000444">
    <property type="component" value="Chromosome"/>
</dbReference>
<dbReference type="GO" id="GO:0004400">
    <property type="term" value="F:histidinol-phosphate transaminase activity"/>
    <property type="evidence" value="ECO:0007669"/>
    <property type="project" value="UniProtKB-UniRule"/>
</dbReference>
<dbReference type="GO" id="GO:0030170">
    <property type="term" value="F:pyridoxal phosphate binding"/>
    <property type="evidence" value="ECO:0007669"/>
    <property type="project" value="InterPro"/>
</dbReference>
<dbReference type="GO" id="GO:0000105">
    <property type="term" value="P:L-histidine biosynthetic process"/>
    <property type="evidence" value="ECO:0007669"/>
    <property type="project" value="UniProtKB-UniRule"/>
</dbReference>
<dbReference type="CDD" id="cd00609">
    <property type="entry name" value="AAT_like"/>
    <property type="match status" value="1"/>
</dbReference>
<dbReference type="Gene3D" id="3.90.1150.10">
    <property type="entry name" value="Aspartate Aminotransferase, domain 1"/>
    <property type="match status" value="1"/>
</dbReference>
<dbReference type="Gene3D" id="3.40.640.10">
    <property type="entry name" value="Type I PLP-dependent aspartate aminotransferase-like (Major domain)"/>
    <property type="match status" value="1"/>
</dbReference>
<dbReference type="HAMAP" id="MF_01023">
    <property type="entry name" value="HisC_aminotrans_2"/>
    <property type="match status" value="1"/>
</dbReference>
<dbReference type="InterPro" id="IPR001917">
    <property type="entry name" value="Aminotrans_II_pyridoxalP_BS"/>
</dbReference>
<dbReference type="InterPro" id="IPR004839">
    <property type="entry name" value="Aminotransferase_I/II_large"/>
</dbReference>
<dbReference type="InterPro" id="IPR005861">
    <property type="entry name" value="HisP_aminotrans"/>
</dbReference>
<dbReference type="InterPro" id="IPR050106">
    <property type="entry name" value="HistidinolP_aminotransfase"/>
</dbReference>
<dbReference type="InterPro" id="IPR015424">
    <property type="entry name" value="PyrdxlP-dep_Trfase"/>
</dbReference>
<dbReference type="InterPro" id="IPR015421">
    <property type="entry name" value="PyrdxlP-dep_Trfase_major"/>
</dbReference>
<dbReference type="InterPro" id="IPR015422">
    <property type="entry name" value="PyrdxlP-dep_Trfase_small"/>
</dbReference>
<dbReference type="NCBIfam" id="TIGR01141">
    <property type="entry name" value="hisC"/>
    <property type="match status" value="1"/>
</dbReference>
<dbReference type="PANTHER" id="PTHR43643:SF3">
    <property type="entry name" value="HISTIDINOL-PHOSPHATE AMINOTRANSFERASE"/>
    <property type="match status" value="1"/>
</dbReference>
<dbReference type="PANTHER" id="PTHR43643">
    <property type="entry name" value="HISTIDINOL-PHOSPHATE AMINOTRANSFERASE 2"/>
    <property type="match status" value="1"/>
</dbReference>
<dbReference type="Pfam" id="PF00155">
    <property type="entry name" value="Aminotran_1_2"/>
    <property type="match status" value="1"/>
</dbReference>
<dbReference type="SUPFAM" id="SSF53383">
    <property type="entry name" value="PLP-dependent transferases"/>
    <property type="match status" value="1"/>
</dbReference>
<dbReference type="PROSITE" id="PS00599">
    <property type="entry name" value="AA_TRANSFER_CLASS_2"/>
    <property type="match status" value="1"/>
</dbReference>
<evidence type="ECO:0000255" key="1">
    <source>
        <dbReference type="HAMAP-Rule" id="MF_01023"/>
    </source>
</evidence>
<comment type="catalytic activity">
    <reaction evidence="1">
        <text>L-histidinol phosphate + 2-oxoglutarate = 3-(imidazol-4-yl)-2-oxopropyl phosphate + L-glutamate</text>
        <dbReference type="Rhea" id="RHEA:23744"/>
        <dbReference type="ChEBI" id="CHEBI:16810"/>
        <dbReference type="ChEBI" id="CHEBI:29985"/>
        <dbReference type="ChEBI" id="CHEBI:57766"/>
        <dbReference type="ChEBI" id="CHEBI:57980"/>
        <dbReference type="EC" id="2.6.1.9"/>
    </reaction>
</comment>
<comment type="cofactor">
    <cofactor evidence="1">
        <name>pyridoxal 5'-phosphate</name>
        <dbReference type="ChEBI" id="CHEBI:597326"/>
    </cofactor>
</comment>
<comment type="pathway">
    <text evidence="1">Amino-acid biosynthesis; L-histidine biosynthesis; L-histidine from 5-phospho-alpha-D-ribose 1-diphosphate: step 7/9.</text>
</comment>
<comment type="subunit">
    <text evidence="1">Homodimer.</text>
</comment>
<comment type="similarity">
    <text evidence="1">Belongs to the class-II pyridoxal-phosphate-dependent aminotransferase family. Histidinol-phosphate aminotransferase subfamily.</text>
</comment>
<gene>
    <name evidence="1" type="primary">hisC</name>
    <name type="ordered locus">Sca_0371</name>
</gene>
<organism>
    <name type="scientific">Staphylococcus carnosus (strain TM300)</name>
    <dbReference type="NCBI Taxonomy" id="396513"/>
    <lineage>
        <taxon>Bacteria</taxon>
        <taxon>Bacillati</taxon>
        <taxon>Bacillota</taxon>
        <taxon>Bacilli</taxon>
        <taxon>Bacillales</taxon>
        <taxon>Staphylococcaceae</taxon>
        <taxon>Staphylococcus</taxon>
    </lineage>
</organism>
<name>HIS8_STACT</name>
<accession>B9DK21</accession>
<sequence>MKEQIQQLSAYQPGLSPRALKKEFGLDIDLHKLASNENLYGPSPKAKEAIKEHVDEVLYYPETGAPTLRKKIADTLNIDENRILFGAGLDEVILMISRAVLTPGDKIVTSQATFGQYYHNAIVESAEVVQVPLKENGQFDLDGILNEIDEDTALVWICNPNNPTGTYVTHEELEAFLEKVPSNVPVLVDEAYFEFVTADDFPDTLKLQEKFPNAFLMRTFSKAYGLAGLRVGYVIATKEAIHNYNIIRPPFNVGRLSEYAAVAAFEDQDYLKEIQKRNAEERAKFFEIPESKHFFDSQTNFIFVNTKRPKELYEALLKVGCITREFPIGVRITIGFPEQNDKMIEVLKNFDFEA</sequence>
<proteinExistence type="inferred from homology"/>
<keyword id="KW-0028">Amino-acid biosynthesis</keyword>
<keyword id="KW-0032">Aminotransferase</keyword>
<keyword id="KW-0368">Histidine biosynthesis</keyword>
<keyword id="KW-0663">Pyridoxal phosphate</keyword>
<keyword id="KW-1185">Reference proteome</keyword>
<keyword id="KW-0808">Transferase</keyword>
<reference key="1">
    <citation type="journal article" date="2009" name="Appl. Environ. Microbiol.">
        <title>Genome analysis of the meat starter culture bacterium Staphylococcus carnosus TM300.</title>
        <authorList>
            <person name="Rosenstein R."/>
            <person name="Nerz C."/>
            <person name="Biswas L."/>
            <person name="Resch A."/>
            <person name="Raddatz G."/>
            <person name="Schuster S.C."/>
            <person name="Goetz F."/>
        </authorList>
    </citation>
    <scope>NUCLEOTIDE SEQUENCE [LARGE SCALE GENOMIC DNA]</scope>
    <source>
        <strain>TM300</strain>
    </source>
</reference>